<proteinExistence type="evidence at protein level"/>
<sequence length="143" mass="16107">MLMRTDPFREFDRITRELTAPGTWSRPTAMPMDACREGDTYVVSFDLPGVDPEAIEIDIERNMLTVKAERGPAGNAEHVRMEVAERPLGVFSRQLVLADTLDTEQVRADYDAGVLTLRIPIAERAKRRRVKVGQGESHRQITG</sequence>
<feature type="chain" id="PRO_0000126056" description="18 kDa heat shock protein">
    <location>
        <begin position="1"/>
        <end position="143"/>
    </location>
</feature>
<feature type="domain" description="sHSP" evidence="1">
    <location>
        <begin position="23"/>
        <end position="135"/>
    </location>
</feature>
<organism>
    <name type="scientific">Streptomyces albus G</name>
    <dbReference type="NCBI Taxonomy" id="1962"/>
    <lineage>
        <taxon>Bacteria</taxon>
        <taxon>Bacillati</taxon>
        <taxon>Actinomycetota</taxon>
        <taxon>Actinomycetes</taxon>
        <taxon>Kitasatosporales</taxon>
        <taxon>Streptomycetaceae</taxon>
        <taxon>Streptomyces</taxon>
    </lineage>
</organism>
<dbReference type="EMBL" id="U17419">
    <property type="protein sequence ID" value="AAA86472.1"/>
    <property type="molecule type" value="Genomic_DNA"/>
</dbReference>
<dbReference type="PIR" id="A57270">
    <property type="entry name" value="A57270"/>
</dbReference>
<dbReference type="SMR" id="Q53595"/>
<dbReference type="CDD" id="cd06464">
    <property type="entry name" value="ACD_sHsps-like"/>
    <property type="match status" value="1"/>
</dbReference>
<dbReference type="Gene3D" id="2.60.40.790">
    <property type="match status" value="1"/>
</dbReference>
<dbReference type="InterPro" id="IPR002068">
    <property type="entry name" value="A-crystallin/Hsp20_dom"/>
</dbReference>
<dbReference type="InterPro" id="IPR008978">
    <property type="entry name" value="HSP20-like_chaperone"/>
</dbReference>
<dbReference type="InterPro" id="IPR031107">
    <property type="entry name" value="Small_HSP"/>
</dbReference>
<dbReference type="PANTHER" id="PTHR11527">
    <property type="entry name" value="HEAT-SHOCK PROTEIN 20 FAMILY MEMBER"/>
    <property type="match status" value="1"/>
</dbReference>
<dbReference type="Pfam" id="PF00011">
    <property type="entry name" value="HSP20"/>
    <property type="match status" value="1"/>
</dbReference>
<dbReference type="SUPFAM" id="SSF49764">
    <property type="entry name" value="HSP20-like chaperones"/>
    <property type="match status" value="1"/>
</dbReference>
<dbReference type="PROSITE" id="PS01031">
    <property type="entry name" value="SHSP"/>
    <property type="match status" value="1"/>
</dbReference>
<comment type="induction">
    <text>By heat shock.</text>
</comment>
<comment type="similarity">
    <text evidence="1">Belongs to the small heat shock protein (HSP20) family.</text>
</comment>
<name>HSP18_STRAL</name>
<protein>
    <recommendedName>
        <fullName>18 kDa heat shock protein</fullName>
    </recommendedName>
    <alternativeName>
        <fullName>HSP 18</fullName>
    </alternativeName>
</protein>
<reference key="1">
    <citation type="journal article" date="1995" name="J. Bacteriol.">
        <title>Characterization of Streptomyces albus 18-kilodalton heat shock-responsive protein.</title>
        <authorList>
            <person name="Servant P."/>
            <person name="Mazodier P."/>
        </authorList>
    </citation>
    <scope>NUCLEOTIDE SEQUENCE [GENOMIC DNA]</scope>
    <scope>PARTIAL PROTEIN SEQUENCE</scope>
</reference>
<gene>
    <name type="primary">hsp18</name>
</gene>
<keyword id="KW-0903">Direct protein sequencing</keyword>
<keyword id="KW-0346">Stress response</keyword>
<evidence type="ECO:0000255" key="1">
    <source>
        <dbReference type="PROSITE-ProRule" id="PRU00285"/>
    </source>
</evidence>
<accession>Q53595</accession>